<comment type="function">
    <text evidence="4 5 6 7 8 11">Cytochrome P450 monooxygenase; part of the gene cluster that mediates the biosynthesis of pneumocandins, lipohexapeptides of the echinocandin family that prevent fungal cell wall formation by non-competitive inhibition of beta-1,3-glucan synthase (PubMed:27705900). The 10,12-dimethylmyristoyl side chain is synthesized by the reducing polyketide synthase gloL/GLPKS4 (PubMed:27494047). The thioesterase gloN/GLHYD exclusively interacts with gloL/GLPKS4 to maintain turnover of the polyketide side chain (PubMed:27494047). The 10R,12S-dimethylmyristic acid is then transferred to the first thiolation domain of the nonribosomal peptide synthetase gloA/GLNRPS4 by the acyl-AMP ligase gloD/GLligase, followed by its acylation to L-ornithine to trigger elongation of the cyclic hexapeptide (PubMed:27494047). L-ornithine, 4R-hydroxyl-L-proline (generated from L-proline by the dioxygenase gloF/GLOXY2), 3S-hydroxyl-L-homotyrosine (generated by gloG/GLHtyB, gloH/GLHtyA, gloI/GLHtyC, gloJ/GLHtyD and hydroxylated at C-3 by the dioxygenase gloM/GLOXY1), 3R-hydroxyl-L-glutamine (generated from L-glutamine probably by the dioxygenase gloE/GLOXY3) and 3S-hydroxyl-L-proline (generated from L-proline by the dioxygenase gloF/GLOXY2 to yield pneumocandin B0), or 3S-hydroxyl-4S-methyl-L-proline (generated from L-leucine by the dioxygenase gloC/GLOXY4 to yield pneumocandin A0) are sequentially added to the growing chain (PubMed:25270390, PubMed:25527531, PubMed:25879325). The last C domain of gloA/GLNRPS4 is proposed to be responsible for cyclization by condensation to form the peptide bond between L-ornithine and 3S-hydroxyl-4S-methyl-L-proline (for pneumocandin A0) or 3S-hydroxyl-L-proline (for pneumocandin B0). Finally, the subsequent C-4 hydroxylation of 3S-hydroxyl-L-homotyrosine and L-ornithine dihydroxylation at C-4 and C-5 are performed by the cytochrome P450 monooxygenases gloP/GLP450-1 and gloO/GLP450-2, respectively (PubMed:25879325).</text>
</comment>
<comment type="cofactor">
    <cofactor evidence="1">
        <name>heme</name>
        <dbReference type="ChEBI" id="CHEBI:30413"/>
    </cofactor>
</comment>
<comment type="pathway">
    <text evidence="6">Mycotoxin biosynthesis.</text>
</comment>
<comment type="subcellular location">
    <subcellularLocation>
        <location evidence="2">Membrane</location>
        <topology evidence="2">Single-pass membrane protein</topology>
    </subcellularLocation>
</comment>
<comment type="disruption phenotype">
    <text evidence="6">Leads to the production of pneumocandin analogs with 3S-hydroxyl-L-homotyrosine (PubMed:25879325).</text>
</comment>
<comment type="biotechnology">
    <text evidence="5 6 7">Pneumocandin B0 is the starting molecule for the first semisynthetic echinocandin antifungal drug, caspofungin acetate (PubMed:25527531). Pneumocandin B0 is a minor fermentation product, and its industrial production was achieved by a combination of extensive mutation and medium optimization (PubMed:25527531). Inactivation of three of gloP/GLP450-1, gloO/GLP450-2, and gloM/GLOXY1 generates 13 different pneumocandin analogs that lack one, two, three, or four hydroxyl groups on 4R,5R-dihydroxy-ornithine and 3S,4S-dihydroxy-homotyrosine of the parent hexapeptide (PubMed:25879325). All of these cyclic lipopeptides show potent antifungal activities, and two new metabolites pneumocandins F and G are more potent in vitro against Candida species and Aspergillus fumigatus than the principal fermentation products, pneumocandins A0 and B0 (PubMed:25879325). Moreover, feeding alternative side chain precursors yields acrophiarin and 4 additional pneumocandin congeners with straight C14, C15, and C16 side chains. One of those compounds, pneumocandin I, has elevated antifungal activity and similar hemolytic activity compared to pneumocandin B0, the starting molecule for caspofungin, demonstrating the potential for using gloD/GLligase for future engineering of new echinocandin analogs (PubMed:27494047).</text>
</comment>
<comment type="similarity">
    <text evidence="12">Belongs to the cytochrome P450 family.</text>
</comment>
<evidence type="ECO:0000250" key="1">
    <source>
        <dbReference type="UniProtKB" id="P04798"/>
    </source>
</evidence>
<evidence type="ECO:0000255" key="2"/>
<evidence type="ECO:0000255" key="3">
    <source>
        <dbReference type="PROSITE-ProRule" id="PRU00498"/>
    </source>
</evidence>
<evidence type="ECO:0000269" key="4">
    <source>
    </source>
</evidence>
<evidence type="ECO:0000269" key="5">
    <source>
    </source>
</evidence>
<evidence type="ECO:0000269" key="6">
    <source>
    </source>
</evidence>
<evidence type="ECO:0000269" key="7">
    <source>
    </source>
</evidence>
<evidence type="ECO:0000269" key="8">
    <source>
    </source>
</evidence>
<evidence type="ECO:0000303" key="9">
    <source>
    </source>
</evidence>
<evidence type="ECO:0000303" key="10">
    <source>
    </source>
</evidence>
<evidence type="ECO:0000303" key="11">
    <source>
    </source>
</evidence>
<evidence type="ECO:0000305" key="12"/>
<evidence type="ECO:0000305" key="13">
    <source>
    </source>
</evidence>
<sequence>MLSEVIARVELLIGEQTLSGGILTFLFIVVIAHFVLTRFTVHSRFWNSQAWTGVREEWFPKMRAKVRTIGNIRQMLSDGYEGFSKQNKAFALPVIAEKPWLVLPHSCIPELLAKSDSEIDMKIIHEEQLMHEYTTGSLGRHVVDVPIQYDILLRQVNRKLPLLISAFNEELDKSFCHYWGTDTSYSEVNLSETCEKIVTQALNRIFAGKEICRDEGFLEHSRLYSEGVGRNAIMVRMLPPLLRPLLAPFITYSNRKHRDICLRVCLPVIRERVQHTAAKRADAEHKWEPPLDVLQWIIEESFARNDPKELDPRMITQRLLALNFVAIDTTHMSMAHTILDLYRSPNSDDFLVGLREECERVLQANGGQWTKSGLDDLVCVDSTIRESMRYSDLGYISLTRMVVDPKGTQFNANGTNSSSPLSVPPGIRICVPAHAIHRDAALYPSPYEFQAFRFSKAREKYRGTQTELSEPKVSIVTTTDKFLPFGHGRHACPGRFFAAQQMKLMLAYLVQNYDVEKLSTKIQNKIMVGTTKPDASLKIKVKRRKV</sequence>
<gene>
    <name evidence="9" type="primary">gloP</name>
    <name evidence="10" type="synonym">GLP450-1</name>
    <name type="ORF">GLAREA_10030</name>
</gene>
<reference key="1">
    <citation type="journal article" date="2013" name="BMC Genomics">
        <title>Genomics-driven discovery of the pneumocandin biosynthetic gene cluster in the fungus Glarea lozoyensis.</title>
        <authorList>
            <person name="Chen L."/>
            <person name="Yue Q."/>
            <person name="Zhang X."/>
            <person name="Xiang M."/>
            <person name="Wang C."/>
            <person name="Li S."/>
            <person name="Che Y."/>
            <person name="Ortiz-Lopez F.J."/>
            <person name="Bills G.F."/>
            <person name="Liu X."/>
            <person name="An Z."/>
        </authorList>
    </citation>
    <scope>NUCLEOTIDE SEQUENCE [LARGE SCALE GENOMIC DNA]</scope>
    <scope>IDENTIFICATION</scope>
    <scope>FUNCTION</scope>
    <source>
        <strain>ATCC 20868 / MF5171</strain>
    </source>
</reference>
<reference key="2">
    <citation type="journal article" date="2014" name="ChemBioChem">
        <title>Pneumocandin biosynthesis: involvement of a trans-selective proline hydroxylase.</title>
        <authorList>
            <person name="Houwaart S."/>
            <person name="Youssar L."/>
            <person name="Huettel W."/>
        </authorList>
    </citation>
    <scope>FUNCTION</scope>
</reference>
<reference key="3">
    <citation type="journal article" date="2015" name="ACS Chem. Biol.">
        <title>Genetic manipulation of the pneumocandin biosynthetic pathway for generation of analogues and evaluation of their antifungal activity.</title>
        <authorList>
            <person name="Li Y."/>
            <person name="Chen L."/>
            <person name="Yue Q."/>
            <person name="Liu X."/>
            <person name="An Z."/>
            <person name="Bills G.F."/>
        </authorList>
    </citation>
    <scope>FUNCTION</scope>
    <scope>DISRUPTION PHENOTYPE</scope>
    <scope>PATHWAY</scope>
    <scope>BIOTECHNOLOGY</scope>
</reference>
<reference key="4">
    <citation type="journal article" date="2015" name="Appl. Environ. Microbiol.">
        <title>Engineering of Glarea lozoyensis for exclusive production of the pneumocandin B0 precursor of the antifungal drug caspofungin acetate.</title>
        <authorList>
            <person name="Chen L."/>
            <person name="Yue Q."/>
            <person name="Li Y."/>
            <person name="Niu X."/>
            <person name="Xiang M."/>
            <person name="Wang W."/>
            <person name="Bills G.F."/>
            <person name="Liu X."/>
            <person name="An Z."/>
        </authorList>
    </citation>
    <scope>FUNCTION</scope>
    <scope>BIOTECHNOLOGY</scope>
</reference>
<reference key="5">
    <citation type="journal article" date="2016" name="ACS Chem. Biol.">
        <title>Engineering of new pneumocandin side-chain analogues from Glarea lozoyensis by mutasynthesis and evaluation of their antifungal activity.</title>
        <authorList>
            <person name="Chen L."/>
            <person name="Li Y."/>
            <person name="Yue Q."/>
            <person name="Loksztejn A."/>
            <person name="Yokoyama K."/>
            <person name="Felix E.A."/>
            <person name="Liu X."/>
            <person name="Zhang N."/>
            <person name="An Z."/>
            <person name="Bills G.F."/>
        </authorList>
    </citation>
    <scope>FUNCTION</scope>
    <scope>BIOTECHNOLOGY</scope>
</reference>
<reference key="6">
    <citation type="journal article" date="2018" name="Appl. Environ. Microbiol.">
        <title>Cryptic production of trans-3-hydroxyproline in echinocandin B biosynthesis.</title>
        <authorList>
            <person name="Mattay J."/>
            <person name="Houwaart S."/>
            <person name="Huettel W."/>
        </authorList>
    </citation>
    <scope>FUNCTION</scope>
</reference>
<reference key="7">
    <citation type="journal article" date="2017" name="Z. Naturforsch. C">
        <title>Structural diversity in echinocandin biosynthesis: the impact of oxidation steps and approaches toward an evolutionary explanation.</title>
        <authorList>
            <person name="Huettel W."/>
        </authorList>
    </citation>
    <scope>REVIEW</scope>
</reference>
<organism>
    <name type="scientific">Glarea lozoyensis (strain ATCC 20868 / MF5171)</name>
    <dbReference type="NCBI Taxonomy" id="1116229"/>
    <lineage>
        <taxon>Eukaryota</taxon>
        <taxon>Fungi</taxon>
        <taxon>Dikarya</taxon>
        <taxon>Ascomycota</taxon>
        <taxon>Pezizomycotina</taxon>
        <taxon>Leotiomycetes</taxon>
        <taxon>Helotiales</taxon>
        <taxon>Helotiaceae</taxon>
        <taxon>Glarea</taxon>
    </lineage>
</organism>
<keyword id="KW-0325">Glycoprotein</keyword>
<keyword id="KW-0349">Heme</keyword>
<keyword id="KW-0408">Iron</keyword>
<keyword id="KW-0472">Membrane</keyword>
<keyword id="KW-0479">Metal-binding</keyword>
<keyword id="KW-0503">Monooxygenase</keyword>
<keyword id="KW-0560">Oxidoreductase</keyword>
<keyword id="KW-1185">Reference proteome</keyword>
<keyword id="KW-0812">Transmembrane</keyword>
<keyword id="KW-1133">Transmembrane helix</keyword>
<name>GLOP_GLAL2</name>
<accession>S3DQN8</accession>
<protein>
    <recommendedName>
        <fullName evidence="9">Cytochrome P450 monooxygenase gloP</fullName>
        <ecNumber evidence="13">1.-.-.-</ecNumber>
    </recommendedName>
    <alternativeName>
        <fullName evidence="11">Homotyrosine 4-hydroxylase</fullName>
    </alternativeName>
    <alternativeName>
        <fullName evidence="9">Pneumocandin biosynthesis cluster protein P</fullName>
    </alternativeName>
</protein>
<proteinExistence type="evidence at protein level"/>
<feature type="chain" id="PRO_0000444490" description="Cytochrome P450 monooxygenase gloP">
    <location>
        <begin position="1"/>
        <end position="546"/>
    </location>
</feature>
<feature type="transmembrane region" description="Helical" evidence="2">
    <location>
        <begin position="17"/>
        <end position="37"/>
    </location>
</feature>
<feature type="binding site" description="axial binding residue" evidence="1">
    <location>
        <position position="492"/>
    </location>
    <ligand>
        <name>heme</name>
        <dbReference type="ChEBI" id="CHEBI:30413"/>
    </ligand>
    <ligandPart>
        <name>Fe</name>
        <dbReference type="ChEBI" id="CHEBI:18248"/>
    </ligandPart>
</feature>
<feature type="glycosylation site" description="N-linked (GlcNAc...) asparagine" evidence="3">
    <location>
        <position position="189"/>
    </location>
</feature>
<feature type="glycosylation site" description="N-linked (GlcNAc...) asparagine" evidence="3">
    <location>
        <position position="413"/>
    </location>
</feature>
<feature type="glycosylation site" description="N-linked (GlcNAc...) asparagine" evidence="3">
    <location>
        <position position="416"/>
    </location>
</feature>
<dbReference type="EC" id="1.-.-.-" evidence="13"/>
<dbReference type="EMBL" id="KE145356">
    <property type="protein sequence ID" value="EPE34336.1"/>
    <property type="molecule type" value="Genomic_DNA"/>
</dbReference>
<dbReference type="RefSeq" id="XP_008078271.1">
    <property type="nucleotide sequence ID" value="XM_008080080.1"/>
</dbReference>
<dbReference type="SMR" id="S3DQN8"/>
<dbReference type="STRING" id="1116229.S3DQN8"/>
<dbReference type="GlyCosmos" id="S3DQN8">
    <property type="glycosylation" value="3 sites, No reported glycans"/>
</dbReference>
<dbReference type="GeneID" id="19469077"/>
<dbReference type="KEGG" id="glz:GLAREA_10030"/>
<dbReference type="eggNOG" id="KOG0684">
    <property type="taxonomic scope" value="Eukaryota"/>
</dbReference>
<dbReference type="HOGENOM" id="CLU_022195_9_2_1"/>
<dbReference type="OMA" id="CMNIISR"/>
<dbReference type="OrthoDB" id="1844152at2759"/>
<dbReference type="Proteomes" id="UP000016922">
    <property type="component" value="Unassembled WGS sequence"/>
</dbReference>
<dbReference type="GO" id="GO:0016020">
    <property type="term" value="C:membrane"/>
    <property type="evidence" value="ECO:0007669"/>
    <property type="project" value="UniProtKB-SubCell"/>
</dbReference>
<dbReference type="GO" id="GO:0020037">
    <property type="term" value="F:heme binding"/>
    <property type="evidence" value="ECO:0007669"/>
    <property type="project" value="InterPro"/>
</dbReference>
<dbReference type="GO" id="GO:0005506">
    <property type="term" value="F:iron ion binding"/>
    <property type="evidence" value="ECO:0007669"/>
    <property type="project" value="InterPro"/>
</dbReference>
<dbReference type="GO" id="GO:0004497">
    <property type="term" value="F:monooxygenase activity"/>
    <property type="evidence" value="ECO:0007669"/>
    <property type="project" value="UniProtKB-KW"/>
</dbReference>
<dbReference type="GO" id="GO:0016705">
    <property type="term" value="F:oxidoreductase activity, acting on paired donors, with incorporation or reduction of molecular oxygen"/>
    <property type="evidence" value="ECO:0007669"/>
    <property type="project" value="InterPro"/>
</dbReference>
<dbReference type="GO" id="GO:0019748">
    <property type="term" value="P:secondary metabolic process"/>
    <property type="evidence" value="ECO:0007669"/>
    <property type="project" value="UniProtKB-ARBA"/>
</dbReference>
<dbReference type="CDD" id="cd11041">
    <property type="entry name" value="CYP503A1-like"/>
    <property type="match status" value="1"/>
</dbReference>
<dbReference type="Gene3D" id="1.10.630.10">
    <property type="entry name" value="Cytochrome P450"/>
    <property type="match status" value="1"/>
</dbReference>
<dbReference type="InterPro" id="IPR001128">
    <property type="entry name" value="Cyt_P450"/>
</dbReference>
<dbReference type="InterPro" id="IPR017972">
    <property type="entry name" value="Cyt_P450_CS"/>
</dbReference>
<dbReference type="InterPro" id="IPR002403">
    <property type="entry name" value="Cyt_P450_E_grp-IV"/>
</dbReference>
<dbReference type="InterPro" id="IPR036396">
    <property type="entry name" value="Cyt_P450_sf"/>
</dbReference>
<dbReference type="PANTHER" id="PTHR46206">
    <property type="entry name" value="CYTOCHROME P450"/>
    <property type="match status" value="1"/>
</dbReference>
<dbReference type="PANTHER" id="PTHR46206:SF1">
    <property type="entry name" value="P450, PUTATIVE (EUROFUNG)-RELATED"/>
    <property type="match status" value="1"/>
</dbReference>
<dbReference type="Pfam" id="PF00067">
    <property type="entry name" value="p450"/>
    <property type="match status" value="1"/>
</dbReference>
<dbReference type="PRINTS" id="PR00465">
    <property type="entry name" value="EP450IV"/>
</dbReference>
<dbReference type="SUPFAM" id="SSF48264">
    <property type="entry name" value="Cytochrome P450"/>
    <property type="match status" value="1"/>
</dbReference>
<dbReference type="PROSITE" id="PS00086">
    <property type="entry name" value="CYTOCHROME_P450"/>
    <property type="match status" value="1"/>
</dbReference>